<reference key="1">
    <citation type="journal article" date="2005" name="PLoS Biol.">
        <title>Major structural differences and novel potential virulence mechanisms from the genomes of multiple Campylobacter species.</title>
        <authorList>
            <person name="Fouts D.E."/>
            <person name="Mongodin E.F."/>
            <person name="Mandrell R.E."/>
            <person name="Miller W.G."/>
            <person name="Rasko D.A."/>
            <person name="Ravel J."/>
            <person name="Brinkac L.M."/>
            <person name="DeBoy R.T."/>
            <person name="Parker C.T."/>
            <person name="Daugherty S.C."/>
            <person name="Dodson R.J."/>
            <person name="Durkin A.S."/>
            <person name="Madupu R."/>
            <person name="Sullivan S.A."/>
            <person name="Shetty J.U."/>
            <person name="Ayodeji M.A."/>
            <person name="Shvartsbeyn A."/>
            <person name="Schatz M.C."/>
            <person name="Badger J.H."/>
            <person name="Fraser C.M."/>
            <person name="Nelson K.E."/>
        </authorList>
    </citation>
    <scope>NUCLEOTIDE SEQUENCE [LARGE SCALE GENOMIC DNA]</scope>
    <source>
        <strain>RM1221</strain>
    </source>
</reference>
<dbReference type="EC" id="4.1.1.49" evidence="1"/>
<dbReference type="EMBL" id="CP000025">
    <property type="protein sequence ID" value="AAW35343.1"/>
    <property type="molecule type" value="Genomic_DNA"/>
</dbReference>
<dbReference type="RefSeq" id="WP_002867446.1">
    <property type="nucleotide sequence ID" value="NC_003912.7"/>
</dbReference>
<dbReference type="SMR" id="Q5HUM7"/>
<dbReference type="KEGG" id="cjr:CJE1010"/>
<dbReference type="HOGENOM" id="CLU_018247_0_1_7"/>
<dbReference type="UniPathway" id="UPA00138"/>
<dbReference type="GO" id="GO:0005829">
    <property type="term" value="C:cytosol"/>
    <property type="evidence" value="ECO:0007669"/>
    <property type="project" value="TreeGrafter"/>
</dbReference>
<dbReference type="GO" id="GO:0005524">
    <property type="term" value="F:ATP binding"/>
    <property type="evidence" value="ECO:0007669"/>
    <property type="project" value="UniProtKB-UniRule"/>
</dbReference>
<dbReference type="GO" id="GO:0046872">
    <property type="term" value="F:metal ion binding"/>
    <property type="evidence" value="ECO:0007669"/>
    <property type="project" value="UniProtKB-KW"/>
</dbReference>
<dbReference type="GO" id="GO:0004612">
    <property type="term" value="F:phosphoenolpyruvate carboxykinase (ATP) activity"/>
    <property type="evidence" value="ECO:0007669"/>
    <property type="project" value="UniProtKB-UniRule"/>
</dbReference>
<dbReference type="GO" id="GO:0006094">
    <property type="term" value="P:gluconeogenesis"/>
    <property type="evidence" value="ECO:0007669"/>
    <property type="project" value="UniProtKB-UniRule"/>
</dbReference>
<dbReference type="CDD" id="cd00484">
    <property type="entry name" value="PEPCK_ATP"/>
    <property type="match status" value="1"/>
</dbReference>
<dbReference type="FunFam" id="2.170.8.10:FF:000001">
    <property type="entry name" value="Phosphoenolpyruvate carboxykinase (ATP)"/>
    <property type="match status" value="1"/>
</dbReference>
<dbReference type="FunFam" id="3.40.449.10:FF:000001">
    <property type="entry name" value="Phosphoenolpyruvate carboxykinase (ATP)"/>
    <property type="match status" value="1"/>
</dbReference>
<dbReference type="Gene3D" id="3.90.228.20">
    <property type="match status" value="1"/>
</dbReference>
<dbReference type="Gene3D" id="3.40.449.10">
    <property type="entry name" value="Phosphoenolpyruvate Carboxykinase, domain 1"/>
    <property type="match status" value="1"/>
</dbReference>
<dbReference type="Gene3D" id="2.170.8.10">
    <property type="entry name" value="Phosphoenolpyruvate Carboxykinase, domain 2"/>
    <property type="match status" value="1"/>
</dbReference>
<dbReference type="HAMAP" id="MF_00453">
    <property type="entry name" value="PEPCK_ATP"/>
    <property type="match status" value="1"/>
</dbReference>
<dbReference type="InterPro" id="IPR001272">
    <property type="entry name" value="PEP_carboxykinase_ATP"/>
</dbReference>
<dbReference type="InterPro" id="IPR013035">
    <property type="entry name" value="PEP_carboxykinase_C"/>
</dbReference>
<dbReference type="InterPro" id="IPR008210">
    <property type="entry name" value="PEP_carboxykinase_N"/>
</dbReference>
<dbReference type="InterPro" id="IPR015994">
    <property type="entry name" value="PEPCK_ATP_CS"/>
</dbReference>
<dbReference type="NCBIfam" id="TIGR00224">
    <property type="entry name" value="pckA"/>
    <property type="match status" value="1"/>
</dbReference>
<dbReference type="NCBIfam" id="NF006819">
    <property type="entry name" value="PRK09344.1-1"/>
    <property type="match status" value="1"/>
</dbReference>
<dbReference type="NCBIfam" id="NF006820">
    <property type="entry name" value="PRK09344.1-2"/>
    <property type="match status" value="1"/>
</dbReference>
<dbReference type="NCBIfam" id="NF006821">
    <property type="entry name" value="PRK09344.1-3"/>
    <property type="match status" value="1"/>
</dbReference>
<dbReference type="PANTHER" id="PTHR30031:SF0">
    <property type="entry name" value="PHOSPHOENOLPYRUVATE CARBOXYKINASE (ATP)"/>
    <property type="match status" value="1"/>
</dbReference>
<dbReference type="PANTHER" id="PTHR30031">
    <property type="entry name" value="PHOSPHOENOLPYRUVATE CARBOXYKINASE ATP"/>
    <property type="match status" value="1"/>
</dbReference>
<dbReference type="Pfam" id="PF01293">
    <property type="entry name" value="PEPCK_ATP"/>
    <property type="match status" value="1"/>
</dbReference>
<dbReference type="PIRSF" id="PIRSF006294">
    <property type="entry name" value="PEP_crbxkin"/>
    <property type="match status" value="1"/>
</dbReference>
<dbReference type="SUPFAM" id="SSF68923">
    <property type="entry name" value="PEP carboxykinase N-terminal domain"/>
    <property type="match status" value="1"/>
</dbReference>
<dbReference type="SUPFAM" id="SSF53795">
    <property type="entry name" value="PEP carboxykinase-like"/>
    <property type="match status" value="1"/>
</dbReference>
<dbReference type="PROSITE" id="PS00532">
    <property type="entry name" value="PEPCK_ATP"/>
    <property type="match status" value="1"/>
</dbReference>
<feature type="chain" id="PRO_0000236921" description="Phosphoenolpyruvate carboxykinase (ATP)">
    <location>
        <begin position="1"/>
        <end position="524"/>
    </location>
</feature>
<feature type="binding site" evidence="1">
    <location>
        <position position="52"/>
    </location>
    <ligand>
        <name>substrate</name>
    </ligand>
</feature>
<feature type="binding site" evidence="1">
    <location>
        <position position="188"/>
    </location>
    <ligand>
        <name>substrate</name>
    </ligand>
</feature>
<feature type="binding site" evidence="1">
    <location>
        <position position="194"/>
    </location>
    <ligand>
        <name>ATP</name>
        <dbReference type="ChEBI" id="CHEBI:30616"/>
    </ligand>
</feature>
<feature type="binding site" evidence="1">
    <location>
        <position position="194"/>
    </location>
    <ligand>
        <name>Mn(2+)</name>
        <dbReference type="ChEBI" id="CHEBI:29035"/>
    </ligand>
</feature>
<feature type="binding site" evidence="1">
    <location>
        <position position="194"/>
    </location>
    <ligand>
        <name>substrate</name>
    </ligand>
</feature>
<feature type="binding site" evidence="1">
    <location>
        <position position="213"/>
    </location>
    <ligand>
        <name>ATP</name>
        <dbReference type="ChEBI" id="CHEBI:30616"/>
    </ligand>
</feature>
<feature type="binding site" evidence="1">
    <location>
        <position position="213"/>
    </location>
    <ligand>
        <name>Mn(2+)</name>
        <dbReference type="ChEBI" id="CHEBI:29035"/>
    </ligand>
</feature>
<feature type="binding site" evidence="1">
    <location>
        <begin position="229"/>
        <end position="237"/>
    </location>
    <ligand>
        <name>ATP</name>
        <dbReference type="ChEBI" id="CHEBI:30616"/>
    </ligand>
</feature>
<feature type="binding site" evidence="1">
    <location>
        <position position="250"/>
    </location>
    <ligand>
        <name>Mn(2+)</name>
        <dbReference type="ChEBI" id="CHEBI:29035"/>
    </ligand>
</feature>
<feature type="binding site" evidence="1">
    <location>
        <position position="278"/>
    </location>
    <ligand>
        <name>ATP</name>
        <dbReference type="ChEBI" id="CHEBI:30616"/>
    </ligand>
</feature>
<feature type="binding site" evidence="1">
    <location>
        <position position="314"/>
    </location>
    <ligand>
        <name>ATP</name>
        <dbReference type="ChEBI" id="CHEBI:30616"/>
    </ligand>
</feature>
<feature type="binding site" evidence="1">
    <location>
        <position position="314"/>
    </location>
    <ligand>
        <name>substrate</name>
    </ligand>
</feature>
<feature type="binding site" evidence="1">
    <location>
        <position position="439"/>
    </location>
    <ligand>
        <name>ATP</name>
        <dbReference type="ChEBI" id="CHEBI:30616"/>
    </ligand>
</feature>
<sequence length="524" mass="59083">MKKFDKLGLDNIKEIFHNLSYDELNAHEKANNEGLSTDNDTFCVDTGIFTGRSPKDKYFVKQDPSSKYIAWGKVNQPITKELFDKLLTKAKQELSGKKIYVQDVFCGASLQSRKAVRFVTEIAWQAHFVKNMFIRPSQEELENFKADFIVYNACKCINEDYKQDGLNSEVFVIFNVEENIAVIGGTWYGGEMKKGIFSMMNYWLPLENKLSMHCSANVGEKDDVALFFGLSGTGKTTLSTDPKRRLIGDDEHGWDDEGVFNFEGGCYAKTINLNPEHEPEIYGAIKRNALLENVVLRADKSVDYADASKTENTRVSYPIEHIENHEPSLKAGHPKNIIFLSADAFGILPPVSKLSKEQAMYYFLSGYTAKVAGTERGITEPQATFSACFGEPFMPLHPTVYARLLGEKIEKHEVNVYLVNTGWSGGSYSVGKRMSIKATRACINAILDGSITKCEFENFEVFDLAIPKALEGVESVLLNPINTWLDKNAYIATRDKLAHMFIQNFKRYEDVKEGIEFSKFGPKI</sequence>
<evidence type="ECO:0000255" key="1">
    <source>
        <dbReference type="HAMAP-Rule" id="MF_00453"/>
    </source>
</evidence>
<comment type="function">
    <text evidence="1">Involved in the gluconeogenesis. Catalyzes the conversion of oxaloacetate (OAA) to phosphoenolpyruvate (PEP) through direct phosphoryl transfer between the nucleoside triphosphate and OAA.</text>
</comment>
<comment type="catalytic activity">
    <reaction evidence="1">
        <text>oxaloacetate + ATP = phosphoenolpyruvate + ADP + CO2</text>
        <dbReference type="Rhea" id="RHEA:18617"/>
        <dbReference type="ChEBI" id="CHEBI:16452"/>
        <dbReference type="ChEBI" id="CHEBI:16526"/>
        <dbReference type="ChEBI" id="CHEBI:30616"/>
        <dbReference type="ChEBI" id="CHEBI:58702"/>
        <dbReference type="ChEBI" id="CHEBI:456216"/>
        <dbReference type="EC" id="4.1.1.49"/>
    </reaction>
</comment>
<comment type="cofactor">
    <cofactor evidence="1">
        <name>Mn(2+)</name>
        <dbReference type="ChEBI" id="CHEBI:29035"/>
    </cofactor>
    <text evidence="1">Binds 1 Mn(2+) ion per subunit.</text>
</comment>
<comment type="pathway">
    <text evidence="1">Carbohydrate biosynthesis; gluconeogenesis.</text>
</comment>
<comment type="subcellular location">
    <subcellularLocation>
        <location evidence="1">Cytoplasm</location>
    </subcellularLocation>
</comment>
<comment type="similarity">
    <text evidence="1">Belongs to the phosphoenolpyruvate carboxykinase (ATP) family.</text>
</comment>
<protein>
    <recommendedName>
        <fullName evidence="1">Phosphoenolpyruvate carboxykinase (ATP)</fullName>
        <shortName evidence="1">PCK</shortName>
        <shortName evidence="1">PEP carboxykinase</shortName>
        <shortName evidence="1">PEPCK</shortName>
        <ecNumber evidence="1">4.1.1.49</ecNumber>
    </recommendedName>
</protein>
<organism>
    <name type="scientific">Campylobacter jejuni (strain RM1221)</name>
    <dbReference type="NCBI Taxonomy" id="195099"/>
    <lineage>
        <taxon>Bacteria</taxon>
        <taxon>Pseudomonadati</taxon>
        <taxon>Campylobacterota</taxon>
        <taxon>Epsilonproteobacteria</taxon>
        <taxon>Campylobacterales</taxon>
        <taxon>Campylobacteraceae</taxon>
        <taxon>Campylobacter</taxon>
    </lineage>
</organism>
<accession>Q5HUM7</accession>
<proteinExistence type="inferred from homology"/>
<name>PCKA_CAMJR</name>
<gene>
    <name evidence="1" type="primary">pckA</name>
    <name type="ordered locus">CJE1010</name>
</gene>
<keyword id="KW-0067">ATP-binding</keyword>
<keyword id="KW-0963">Cytoplasm</keyword>
<keyword id="KW-0210">Decarboxylase</keyword>
<keyword id="KW-0312">Gluconeogenesis</keyword>
<keyword id="KW-0456">Lyase</keyword>
<keyword id="KW-0464">Manganese</keyword>
<keyword id="KW-0479">Metal-binding</keyword>
<keyword id="KW-0547">Nucleotide-binding</keyword>